<reference key="1">
    <citation type="journal article" date="2004" name="J. Bacteriol.">
        <title>The genome sequence of Mycoplasma hyopneumoniae strain 232, the agent of swine mycoplasmosis.</title>
        <authorList>
            <person name="Minion F.C."/>
            <person name="Lefkowitz E.J."/>
            <person name="Madsen M.L."/>
            <person name="Cleary B.J."/>
            <person name="Swartzell S.M."/>
            <person name="Mahairas G.G."/>
        </authorList>
    </citation>
    <scope>NUCLEOTIDE SEQUENCE [LARGE SCALE GENOMIC DNA]</scope>
    <source>
        <strain>232</strain>
    </source>
</reference>
<evidence type="ECO:0000255" key="1">
    <source>
        <dbReference type="HAMAP-Rule" id="MF_00127"/>
    </source>
</evidence>
<organism>
    <name type="scientific">Mesomycoplasma hyopneumoniae (strain 232)</name>
    <name type="common">Mycoplasma hyopneumoniae</name>
    <dbReference type="NCBI Taxonomy" id="295358"/>
    <lineage>
        <taxon>Bacteria</taxon>
        <taxon>Bacillati</taxon>
        <taxon>Mycoplasmatota</taxon>
        <taxon>Mycoplasmoidales</taxon>
        <taxon>Metamycoplasmataceae</taxon>
        <taxon>Mesomycoplasma</taxon>
    </lineage>
</organism>
<name>SYH_MESH2</name>
<protein>
    <recommendedName>
        <fullName evidence="1">Histidine--tRNA ligase</fullName>
        <ecNumber evidence="1">6.1.1.21</ecNumber>
    </recommendedName>
    <alternativeName>
        <fullName evidence="1">Histidyl-tRNA synthetase</fullName>
        <shortName evidence="1">HisRS</shortName>
    </alternativeName>
</protein>
<dbReference type="EC" id="6.1.1.21" evidence="1"/>
<dbReference type="EMBL" id="AE017332">
    <property type="protein sequence ID" value="AAV27734.1"/>
    <property type="molecule type" value="Genomic_DNA"/>
</dbReference>
<dbReference type="RefSeq" id="WP_011205976.1">
    <property type="nucleotide sequence ID" value="NC_006360.1"/>
</dbReference>
<dbReference type="SMR" id="Q601R3"/>
<dbReference type="KEGG" id="mhy:mhp138"/>
<dbReference type="eggNOG" id="COG0124">
    <property type="taxonomic scope" value="Bacteria"/>
</dbReference>
<dbReference type="HOGENOM" id="CLU_025113_1_2_14"/>
<dbReference type="PhylomeDB" id="Q601R3"/>
<dbReference type="Proteomes" id="UP000006822">
    <property type="component" value="Chromosome"/>
</dbReference>
<dbReference type="GO" id="GO:0005737">
    <property type="term" value="C:cytoplasm"/>
    <property type="evidence" value="ECO:0007669"/>
    <property type="project" value="UniProtKB-SubCell"/>
</dbReference>
<dbReference type="GO" id="GO:0005524">
    <property type="term" value="F:ATP binding"/>
    <property type="evidence" value="ECO:0007669"/>
    <property type="project" value="UniProtKB-UniRule"/>
</dbReference>
<dbReference type="GO" id="GO:0004821">
    <property type="term" value="F:histidine-tRNA ligase activity"/>
    <property type="evidence" value="ECO:0007669"/>
    <property type="project" value="UniProtKB-UniRule"/>
</dbReference>
<dbReference type="GO" id="GO:0006427">
    <property type="term" value="P:histidyl-tRNA aminoacylation"/>
    <property type="evidence" value="ECO:0007669"/>
    <property type="project" value="UniProtKB-UniRule"/>
</dbReference>
<dbReference type="CDD" id="cd00773">
    <property type="entry name" value="HisRS-like_core"/>
    <property type="match status" value="1"/>
</dbReference>
<dbReference type="Gene3D" id="3.40.50.800">
    <property type="entry name" value="Anticodon-binding domain"/>
    <property type="match status" value="1"/>
</dbReference>
<dbReference type="Gene3D" id="3.30.930.10">
    <property type="entry name" value="Bira Bifunctional Protein, Domain 2"/>
    <property type="match status" value="1"/>
</dbReference>
<dbReference type="HAMAP" id="MF_00127">
    <property type="entry name" value="His_tRNA_synth"/>
    <property type="match status" value="1"/>
</dbReference>
<dbReference type="InterPro" id="IPR006195">
    <property type="entry name" value="aa-tRNA-synth_II"/>
</dbReference>
<dbReference type="InterPro" id="IPR045864">
    <property type="entry name" value="aa-tRNA-synth_II/BPL/LPL"/>
</dbReference>
<dbReference type="InterPro" id="IPR036621">
    <property type="entry name" value="Anticodon-bd_dom_sf"/>
</dbReference>
<dbReference type="InterPro" id="IPR015807">
    <property type="entry name" value="His-tRNA-ligase"/>
</dbReference>
<dbReference type="InterPro" id="IPR041715">
    <property type="entry name" value="HisRS-like_core"/>
</dbReference>
<dbReference type="InterPro" id="IPR004516">
    <property type="entry name" value="HisRS/HisZ"/>
</dbReference>
<dbReference type="NCBIfam" id="TIGR00442">
    <property type="entry name" value="hisS"/>
    <property type="match status" value="1"/>
</dbReference>
<dbReference type="PANTHER" id="PTHR43707:SF1">
    <property type="entry name" value="HISTIDINE--TRNA LIGASE, MITOCHONDRIAL-RELATED"/>
    <property type="match status" value="1"/>
</dbReference>
<dbReference type="PANTHER" id="PTHR43707">
    <property type="entry name" value="HISTIDYL-TRNA SYNTHETASE"/>
    <property type="match status" value="1"/>
</dbReference>
<dbReference type="Pfam" id="PF13393">
    <property type="entry name" value="tRNA-synt_His"/>
    <property type="match status" value="1"/>
</dbReference>
<dbReference type="PIRSF" id="PIRSF001549">
    <property type="entry name" value="His-tRNA_synth"/>
    <property type="match status" value="1"/>
</dbReference>
<dbReference type="SUPFAM" id="SSF52954">
    <property type="entry name" value="Class II aaRS ABD-related"/>
    <property type="match status" value="1"/>
</dbReference>
<dbReference type="SUPFAM" id="SSF55681">
    <property type="entry name" value="Class II aaRS and biotin synthetases"/>
    <property type="match status" value="1"/>
</dbReference>
<dbReference type="PROSITE" id="PS50862">
    <property type="entry name" value="AA_TRNA_LIGASE_II"/>
    <property type="match status" value="1"/>
</dbReference>
<feature type="chain" id="PRO_0000136199" description="Histidine--tRNA ligase">
    <location>
        <begin position="1"/>
        <end position="428"/>
    </location>
</feature>
<comment type="catalytic activity">
    <reaction evidence="1">
        <text>tRNA(His) + L-histidine + ATP = L-histidyl-tRNA(His) + AMP + diphosphate + H(+)</text>
        <dbReference type="Rhea" id="RHEA:17313"/>
        <dbReference type="Rhea" id="RHEA-COMP:9665"/>
        <dbReference type="Rhea" id="RHEA-COMP:9689"/>
        <dbReference type="ChEBI" id="CHEBI:15378"/>
        <dbReference type="ChEBI" id="CHEBI:30616"/>
        <dbReference type="ChEBI" id="CHEBI:33019"/>
        <dbReference type="ChEBI" id="CHEBI:57595"/>
        <dbReference type="ChEBI" id="CHEBI:78442"/>
        <dbReference type="ChEBI" id="CHEBI:78527"/>
        <dbReference type="ChEBI" id="CHEBI:456215"/>
        <dbReference type="EC" id="6.1.1.21"/>
    </reaction>
</comment>
<comment type="subunit">
    <text evidence="1">Homodimer.</text>
</comment>
<comment type="subcellular location">
    <subcellularLocation>
        <location evidence="1">Cytoplasm</location>
    </subcellularLocation>
</comment>
<comment type="similarity">
    <text evidence="1">Belongs to the class-II aminoacyl-tRNA synthetase family.</text>
</comment>
<keyword id="KW-0030">Aminoacyl-tRNA synthetase</keyword>
<keyword id="KW-0067">ATP-binding</keyword>
<keyword id="KW-0963">Cytoplasm</keyword>
<keyword id="KW-0436">Ligase</keyword>
<keyword id="KW-0547">Nucleotide-binding</keyword>
<keyword id="KW-0648">Protein biosynthesis</keyword>
<proteinExistence type="inferred from homology"/>
<sequence length="428" mass="50401">MKKKLNLCPKGTYDFFGQGAKIFIDVRKVFFNQAKKFNFSYIETPIFEYANIFLTTNQIADIVSKELYKFFDKSGRELALRPEGTAPIMRSVAQHKLFQTEKKFFYFGPMFRYENPQKGRFRQFYQAGFEIINYKKDSLEFQILEIILLIKSIFKDLGINEYEIKINFLSNLTTRNIYKKNLAQYFEKFSDKLEPISKIRIKKNPLRILDDKIEQEKEFVKLAPKINTFWTMEDKNIFNRITSILEEFKIIYKVDYNLVRGLDYYDDFVFEFIDTSQTLGTKLALVGGGCYNNLPTKFGLNNFKSIGMAFGIERLIEIIKSKKNIKEQNLDFFLLSFTDKEILLNFKLAKILRKENFLVDLNKTPFSVSKGFQLAKKSGAKFVFFFEKNQAKNYISLKNLQTGKNEQILYTEINFEYLNSIIKASENA</sequence>
<accession>Q601R3</accession>
<gene>
    <name evidence="1" type="primary">hisS</name>
    <name type="ordered locus">mhp138</name>
</gene>